<keyword id="KW-0945">Host-virus interaction</keyword>
<keyword id="KW-0378">Hydrolase</keyword>
<keyword id="KW-1090">Inhibition of host innate immune response by virus</keyword>
<keyword id="KW-1185">Reference proteome</keyword>
<keyword id="KW-0899">Viral immunoevasion</keyword>
<sequence>MKSFIEVAKPVVDSGIYMCAKFDQASCEALAQVQKLLGVENPVSAEKLHTTIVYSRKTVDLFPASGISEPARLVDVEKWDTKYGNTIVGVLESDYLHSRFNDAMDAGATYDFDNYKPHVTLAYDSRIEDISGVKRLLTLPVDLTIIKEDAESLDLDKTVEDITEHIEHRGESS</sequence>
<protein>
    <recommendedName>
        <fullName evidence="4">Anti-CBASS protein Acb1</fullName>
        <shortName evidence="4">Acb1</shortName>
    </recommendedName>
    <alternativeName>
        <fullName>Gene product 57B</fullName>
        <shortName>gp57B</shortName>
    </alternativeName>
</protein>
<feature type="chain" id="PRO_0000456662" description="Anti-CBASS protein Acb1">
    <location>
        <begin position="1"/>
        <end position="173"/>
    </location>
</feature>
<feature type="active site" evidence="1">
    <location>
        <position position="49"/>
    </location>
</feature>
<feature type="active site" evidence="1">
    <location>
        <position position="51"/>
    </location>
</feature>
<feature type="active site" evidence="1">
    <location>
        <position position="118"/>
    </location>
</feature>
<feature type="active site" evidence="1">
    <location>
        <position position="120"/>
    </location>
</feature>
<feature type="binding site" evidence="1">
    <location>
        <position position="17"/>
    </location>
    <ligand>
        <name>3',3'-cGAMP</name>
        <dbReference type="ChEBI" id="CHEBI:71501"/>
    </ligand>
</feature>
<feature type="binding site" evidence="1">
    <location>
        <position position="17"/>
    </location>
    <ligand>
        <name>3',3'-cUAMP</name>
        <dbReference type="ChEBI" id="CHEBI:143809"/>
    </ligand>
</feature>
<feature type="binding site" description="specific to adenosine" evidence="1">
    <location>
        <position position="151"/>
    </location>
    <ligand>
        <name>3',3'-cGAMP</name>
        <dbReference type="ChEBI" id="CHEBI:71501"/>
    </ligand>
</feature>
<feature type="binding site" description="specific to adenosine" evidence="1">
    <location>
        <position position="151"/>
    </location>
    <ligand>
        <name>3',3'-cUAMP</name>
        <dbReference type="ChEBI" id="CHEBI:143809"/>
    </ligand>
</feature>
<gene>
    <name evidence="6" type="primary">57B</name>
    <name evidence="6" type="ORF">RB16p181</name>
</gene>
<reference key="1">
    <citation type="journal article" date="2010" name="Virol. J.">
        <title>Genomes of the T4-related bacteriophages as windows on microbial genome evolution.</title>
        <authorList>
            <person name="Petrov V.M."/>
            <person name="Ratnayaka S."/>
            <person name="Nolan J.M."/>
            <person name="Miller E.S."/>
            <person name="Karam J.D."/>
        </authorList>
    </citation>
    <scope>NUCLEOTIDE SEQUENCE [LARGE SCALE GENOMIC DNA]</scope>
</reference>
<reference key="2">
    <citation type="journal article" date="2022" name="Nature">
        <title>Phage anti-CBASS and anti-Pycsar nucleases subvert bacterial immunity.</title>
        <authorList>
            <person name="Hobbs S.J."/>
            <person name="Wein T."/>
            <person name="Lu A."/>
            <person name="Morehouse B.R."/>
            <person name="Schnabel J."/>
            <person name="Leavitt A."/>
            <person name="Yirmiya E."/>
            <person name="Sorek R."/>
            <person name="Kranzusch P.J."/>
        </authorList>
    </citation>
    <scope>FUNCTION</scope>
    <scope>CATALYTIC ACTIVITY</scope>
</reference>
<proteinExistence type="evidence at protein level"/>
<accession>D9ICP2</accession>
<dbReference type="EMBL" id="HM134276">
    <property type="protein sequence ID" value="ADJ55485.1"/>
    <property type="molecule type" value="Genomic_DNA"/>
</dbReference>
<dbReference type="RefSeq" id="YP_003858481.1">
    <property type="nucleotide sequence ID" value="NC_014467.1"/>
</dbReference>
<dbReference type="SMR" id="D9ICP2"/>
<dbReference type="GeneID" id="9712922"/>
<dbReference type="KEGG" id="vg:9712922"/>
<dbReference type="Proteomes" id="UP000001091">
    <property type="component" value="Genome"/>
</dbReference>
<dbReference type="GO" id="GO:0016787">
    <property type="term" value="F:hydrolase activity"/>
    <property type="evidence" value="ECO:0007669"/>
    <property type="project" value="UniProtKB-KW"/>
</dbReference>
<dbReference type="GO" id="GO:0052170">
    <property type="term" value="P:symbiont-mediated suppression of host innate immune response"/>
    <property type="evidence" value="ECO:0007669"/>
    <property type="project" value="UniProtKB-KW"/>
</dbReference>
<dbReference type="InterPro" id="IPR056175">
    <property type="entry name" value="Acb1-like_C"/>
</dbReference>
<dbReference type="InterPro" id="IPR009097">
    <property type="entry name" value="Cyclic_Pdiesterase"/>
</dbReference>
<dbReference type="Pfam" id="PF23474">
    <property type="entry name" value="Acb1"/>
    <property type="match status" value="1"/>
</dbReference>
<dbReference type="SUPFAM" id="SSF55144">
    <property type="entry name" value="LigT-like"/>
    <property type="match status" value="1"/>
</dbReference>
<comment type="function">
    <text evidence="2 3">Counteracts the host CBASS antiviral defense system. Phosphodiesterase that enables metal-independent hydrolysis of the host cyclic di- and trinucleotide CBASS signals such as 3'3'-cGAMP, 3'3'cUA, and 3'3'3'-cAAA (PubMed:35395152). Does not cleave cGG or cA4 (By similarity). Besides evasion of the CBASS system, might also enable evasion of the type III CRISPR systems that use cA3 signals (By similarity).</text>
</comment>
<comment type="catalytic activity">
    <reaction evidence="3">
        <text>3',3'-cUAMP + H2O = U[3'-5']pAp[3'] + H(+)</text>
        <dbReference type="Rhea" id="RHEA:72835"/>
        <dbReference type="ChEBI" id="CHEBI:15377"/>
        <dbReference type="ChEBI" id="CHEBI:15378"/>
        <dbReference type="ChEBI" id="CHEBI:143809"/>
        <dbReference type="ChEBI" id="CHEBI:192498"/>
    </reaction>
    <physiologicalReaction direction="left-to-right" evidence="3">
        <dbReference type="Rhea" id="RHEA:72836"/>
    </physiologicalReaction>
</comment>
<comment type="catalytic activity">
    <reaction evidence="3">
        <text>3',3',3'-c-tri-AMP + H2O = A[3'-5']pA[3'-5']pAp[3'] + H(+)</text>
        <dbReference type="Rhea" id="RHEA:72859"/>
        <dbReference type="ChEBI" id="CHEBI:15377"/>
        <dbReference type="ChEBI" id="CHEBI:15378"/>
        <dbReference type="ChEBI" id="CHEBI:192523"/>
        <dbReference type="ChEBI" id="CHEBI:192530"/>
    </reaction>
    <physiologicalReaction direction="left-to-right" evidence="3">
        <dbReference type="Rhea" id="RHEA:72860"/>
    </physiologicalReaction>
</comment>
<comment type="catalytic activity">
    <reaction evidence="3">
        <text>3',3',3'-cAAG + H2O = G[3'-5']pA[3'-5']pAp[3'] + H(+)</text>
        <dbReference type="Rhea" id="RHEA:72863"/>
        <dbReference type="ChEBI" id="CHEBI:15377"/>
        <dbReference type="ChEBI" id="CHEBI:15378"/>
        <dbReference type="ChEBI" id="CHEBI:143810"/>
        <dbReference type="ChEBI" id="CHEBI:192532"/>
    </reaction>
    <physiologicalReaction direction="left-to-right" evidence="3">
        <dbReference type="Rhea" id="RHEA:72864"/>
    </physiologicalReaction>
</comment>
<comment type="catalytic activity">
    <reaction evidence="3">
        <text>3',3',3'-cAAG + H2O = A[3'-5']pG[3'-5']pAp[3'] + H(+)</text>
        <dbReference type="Rhea" id="RHEA:72867"/>
        <dbReference type="ChEBI" id="CHEBI:15377"/>
        <dbReference type="ChEBI" id="CHEBI:15378"/>
        <dbReference type="ChEBI" id="CHEBI:143810"/>
        <dbReference type="ChEBI" id="CHEBI:192533"/>
    </reaction>
    <physiologicalReaction direction="left-to-right" evidence="3">
        <dbReference type="Rhea" id="RHEA:72868"/>
    </physiologicalReaction>
</comment>
<comment type="catalytic activity">
    <reaction evidence="3">
        <text>3',3'-cGAMP + H2O = G[3'-5']pAp[3'] + H(+)</text>
        <dbReference type="Rhea" id="RHEA:72831"/>
        <dbReference type="ChEBI" id="CHEBI:15377"/>
        <dbReference type="ChEBI" id="CHEBI:15378"/>
        <dbReference type="ChEBI" id="CHEBI:71501"/>
        <dbReference type="ChEBI" id="CHEBI:192497"/>
    </reaction>
    <physiologicalReaction direction="left-to-right" evidence="3">
        <dbReference type="Rhea" id="RHEA:72832"/>
    </physiologicalReaction>
</comment>
<comment type="similarity">
    <text evidence="5">Belongs to the anti-CBASS protein Acb1 family.</text>
</comment>
<organism>
    <name type="scientific">Escherichia phage RB16</name>
    <dbReference type="NCBI Taxonomy" id="2681599"/>
    <lineage>
        <taxon>Viruses</taxon>
        <taxon>Duplodnaviria</taxon>
        <taxon>Heunggongvirae</taxon>
        <taxon>Uroviricota</taxon>
        <taxon>Caudoviricetes</taxon>
        <taxon>Straboviridae</taxon>
        <taxon>Pseudotevenvirus</taxon>
        <taxon>Pseudotevenvirus RB16</taxon>
    </lineage>
</organism>
<name>ACB1_BPRB1</name>
<evidence type="ECO:0000250" key="1">
    <source>
        <dbReference type="UniProtKB" id="A0A868BQY3"/>
    </source>
</evidence>
<evidence type="ECO:0000250" key="2">
    <source>
        <dbReference type="UniProtKB" id="P04533"/>
    </source>
</evidence>
<evidence type="ECO:0000269" key="3">
    <source>
    </source>
</evidence>
<evidence type="ECO:0000303" key="4">
    <source>
    </source>
</evidence>
<evidence type="ECO:0000305" key="5"/>
<evidence type="ECO:0000312" key="6">
    <source>
        <dbReference type="EMBL" id="ADJ55485.1"/>
    </source>
</evidence>
<organismHost>
    <name type="scientific">Escherichia coli</name>
    <dbReference type="NCBI Taxonomy" id="562"/>
</organismHost>